<feature type="chain" id="PRO_1000186678" description="4-hydroxybenzoate octaprenyltransferase">
    <location>
        <begin position="1"/>
        <end position="287"/>
    </location>
</feature>
<feature type="transmembrane region" description="Helical" evidence="1">
    <location>
        <begin position="7"/>
        <end position="27"/>
    </location>
</feature>
<feature type="transmembrane region" description="Helical" evidence="1">
    <location>
        <begin position="30"/>
        <end position="50"/>
    </location>
</feature>
<feature type="transmembrane region" description="Helical" evidence="1">
    <location>
        <begin position="94"/>
        <end position="114"/>
    </location>
</feature>
<feature type="transmembrane region" description="Helical" evidence="1">
    <location>
        <begin position="118"/>
        <end position="138"/>
    </location>
</feature>
<feature type="transmembrane region" description="Helical" evidence="1">
    <location>
        <begin position="142"/>
        <end position="162"/>
    </location>
</feature>
<feature type="transmembrane region" description="Helical" evidence="1">
    <location>
        <begin position="167"/>
        <end position="187"/>
    </location>
</feature>
<feature type="transmembrane region" description="Helical" evidence="1">
    <location>
        <begin position="209"/>
        <end position="229"/>
    </location>
</feature>
<feature type="transmembrane region" description="Helical" evidence="1">
    <location>
        <begin position="235"/>
        <end position="255"/>
    </location>
</feature>
<feature type="transmembrane region" description="Helical" evidence="1">
    <location>
        <begin position="266"/>
        <end position="286"/>
    </location>
</feature>
<name>UBIA_POLNS</name>
<proteinExistence type="inferred from homology"/>
<gene>
    <name evidence="1" type="primary">ubiA</name>
    <name type="ordered locus">Pnec_1503</name>
</gene>
<reference key="1">
    <citation type="journal article" date="2013" name="Proc. Natl. Acad. Sci. U.S.A.">
        <title>Polynucleobacter necessarius, a model for genome reduction in both free-living and symbiotic bacteria.</title>
        <authorList>
            <person name="Boscaro V."/>
            <person name="Felletti M."/>
            <person name="Vannini C."/>
            <person name="Ackerman M.S."/>
            <person name="Chain P.S."/>
            <person name="Malfatti S."/>
            <person name="Vergez L.M."/>
            <person name="Shin M."/>
            <person name="Doak T.G."/>
            <person name="Lynch M."/>
            <person name="Petroni G."/>
        </authorList>
    </citation>
    <scope>NUCLEOTIDE SEQUENCE [LARGE SCALE GENOMIC DNA]</scope>
    <source>
        <strain>STIR1</strain>
    </source>
</reference>
<comment type="function">
    <text evidence="1">Catalyzes the prenylation of para-hydroxybenzoate (PHB) with an all-trans polyprenyl group. Mediates the second step in the final reaction sequence of ubiquinone-8 (UQ-8) biosynthesis, which is the condensation of the polyisoprenoid side chain with PHB, generating the first membrane-bound Q intermediate 3-octaprenyl-4-hydroxybenzoate.</text>
</comment>
<comment type="catalytic activity">
    <reaction evidence="1">
        <text>all-trans-octaprenyl diphosphate + 4-hydroxybenzoate = 4-hydroxy-3-(all-trans-octaprenyl)benzoate + diphosphate</text>
        <dbReference type="Rhea" id="RHEA:27782"/>
        <dbReference type="ChEBI" id="CHEBI:1617"/>
        <dbReference type="ChEBI" id="CHEBI:17879"/>
        <dbReference type="ChEBI" id="CHEBI:33019"/>
        <dbReference type="ChEBI" id="CHEBI:57711"/>
        <dbReference type="EC" id="2.5.1.39"/>
    </reaction>
</comment>
<comment type="cofactor">
    <cofactor evidence="1">
        <name>Mg(2+)</name>
        <dbReference type="ChEBI" id="CHEBI:18420"/>
    </cofactor>
</comment>
<comment type="pathway">
    <text evidence="1">Cofactor biosynthesis; ubiquinone biosynthesis.</text>
</comment>
<comment type="subcellular location">
    <subcellularLocation>
        <location evidence="1">Cell inner membrane</location>
        <topology evidence="1">Multi-pass membrane protein</topology>
    </subcellularLocation>
</comment>
<comment type="similarity">
    <text evidence="1">Belongs to the UbiA prenyltransferase family.</text>
</comment>
<accession>B1XRV6</accession>
<sequence>MSLKERFISYGYLIRLDKPIGTLLLLWPTLWALWLASSGVLDLSILLIFVAGTFLMRSAGCAINDYADRDFDRHVKRTQGRPVTSGKISAKEAVAVASFLALCAFLLIQPLNAFTKQLSVLALLVAFIYPFTKRFFAMPQTVLGIAFGFGIPMAYAAILDFIPLEAWFLFTGNIFWAIAYDTAYAMVDRDDDLRLGLRTSAITFGQYDVVVIAISYGMLFLSHLWVAQLANLSNYFLVGWFAALACAIYHLKLVSTRNRENCFKAFRHNNWLGGFLFLGIVLGLGVH</sequence>
<keyword id="KW-0997">Cell inner membrane</keyword>
<keyword id="KW-1003">Cell membrane</keyword>
<keyword id="KW-0460">Magnesium</keyword>
<keyword id="KW-0472">Membrane</keyword>
<keyword id="KW-0808">Transferase</keyword>
<keyword id="KW-0812">Transmembrane</keyword>
<keyword id="KW-1133">Transmembrane helix</keyword>
<keyword id="KW-0831">Ubiquinone biosynthesis</keyword>
<organism>
    <name type="scientific">Polynucleobacter necessarius subsp. necessarius (strain STIR1)</name>
    <dbReference type="NCBI Taxonomy" id="452638"/>
    <lineage>
        <taxon>Bacteria</taxon>
        <taxon>Pseudomonadati</taxon>
        <taxon>Pseudomonadota</taxon>
        <taxon>Betaproteobacteria</taxon>
        <taxon>Burkholderiales</taxon>
        <taxon>Burkholderiaceae</taxon>
        <taxon>Polynucleobacter</taxon>
    </lineage>
</organism>
<evidence type="ECO:0000255" key="1">
    <source>
        <dbReference type="HAMAP-Rule" id="MF_01635"/>
    </source>
</evidence>
<dbReference type="EC" id="2.5.1.39" evidence="1"/>
<dbReference type="EMBL" id="CP001010">
    <property type="protein sequence ID" value="ACB44591.1"/>
    <property type="molecule type" value="Genomic_DNA"/>
</dbReference>
<dbReference type="SMR" id="B1XRV6"/>
<dbReference type="STRING" id="452638.Pnec_1503"/>
<dbReference type="KEGG" id="pne:Pnec_1503"/>
<dbReference type="eggNOG" id="COG0382">
    <property type="taxonomic scope" value="Bacteria"/>
</dbReference>
<dbReference type="HOGENOM" id="CLU_034879_1_0_4"/>
<dbReference type="OrthoDB" id="9782418at2"/>
<dbReference type="UniPathway" id="UPA00232"/>
<dbReference type="GO" id="GO:0005886">
    <property type="term" value="C:plasma membrane"/>
    <property type="evidence" value="ECO:0007669"/>
    <property type="project" value="UniProtKB-SubCell"/>
</dbReference>
<dbReference type="GO" id="GO:0008412">
    <property type="term" value="F:4-hydroxybenzoate polyprenyltransferase activity"/>
    <property type="evidence" value="ECO:0007669"/>
    <property type="project" value="UniProtKB-UniRule"/>
</dbReference>
<dbReference type="GO" id="GO:0006744">
    <property type="term" value="P:ubiquinone biosynthetic process"/>
    <property type="evidence" value="ECO:0007669"/>
    <property type="project" value="UniProtKB-UniRule"/>
</dbReference>
<dbReference type="CDD" id="cd13959">
    <property type="entry name" value="PT_UbiA_COQ2"/>
    <property type="match status" value="1"/>
</dbReference>
<dbReference type="FunFam" id="1.10.357.140:FF:000002">
    <property type="entry name" value="4-hydroxybenzoate octaprenyltransferase"/>
    <property type="match status" value="1"/>
</dbReference>
<dbReference type="FunFam" id="1.20.120.1780:FF:000001">
    <property type="entry name" value="4-hydroxybenzoate octaprenyltransferase"/>
    <property type="match status" value="1"/>
</dbReference>
<dbReference type="Gene3D" id="1.10.357.140">
    <property type="entry name" value="UbiA prenyltransferase"/>
    <property type="match status" value="1"/>
</dbReference>
<dbReference type="Gene3D" id="1.20.120.1780">
    <property type="entry name" value="UbiA prenyltransferase"/>
    <property type="match status" value="1"/>
</dbReference>
<dbReference type="HAMAP" id="MF_01635">
    <property type="entry name" value="UbiA"/>
    <property type="match status" value="1"/>
</dbReference>
<dbReference type="InterPro" id="IPR006370">
    <property type="entry name" value="HB_polyprenyltransferase-like"/>
</dbReference>
<dbReference type="InterPro" id="IPR039653">
    <property type="entry name" value="Prenyltransferase"/>
</dbReference>
<dbReference type="InterPro" id="IPR000537">
    <property type="entry name" value="UbiA_prenyltransferase"/>
</dbReference>
<dbReference type="InterPro" id="IPR030470">
    <property type="entry name" value="UbiA_prenylTrfase_CS"/>
</dbReference>
<dbReference type="InterPro" id="IPR044878">
    <property type="entry name" value="UbiA_sf"/>
</dbReference>
<dbReference type="NCBIfam" id="TIGR01474">
    <property type="entry name" value="ubiA_proteo"/>
    <property type="match status" value="1"/>
</dbReference>
<dbReference type="PANTHER" id="PTHR11048:SF28">
    <property type="entry name" value="4-HYDROXYBENZOATE POLYPRENYLTRANSFERASE, MITOCHONDRIAL"/>
    <property type="match status" value="1"/>
</dbReference>
<dbReference type="PANTHER" id="PTHR11048">
    <property type="entry name" value="PRENYLTRANSFERASES"/>
    <property type="match status" value="1"/>
</dbReference>
<dbReference type="Pfam" id="PF01040">
    <property type="entry name" value="UbiA"/>
    <property type="match status" value="1"/>
</dbReference>
<dbReference type="PROSITE" id="PS00943">
    <property type="entry name" value="UBIA"/>
    <property type="match status" value="1"/>
</dbReference>
<protein>
    <recommendedName>
        <fullName evidence="1">4-hydroxybenzoate octaprenyltransferase</fullName>
        <ecNumber evidence="1">2.5.1.39</ecNumber>
    </recommendedName>
    <alternativeName>
        <fullName evidence="1">4-HB polyprenyltransferase</fullName>
    </alternativeName>
</protein>